<evidence type="ECO:0000255" key="1">
    <source>
        <dbReference type="HAMAP-Rule" id="MF_00420"/>
    </source>
</evidence>
<evidence type="ECO:0000305" key="2"/>
<reference key="1">
    <citation type="journal article" date="2002" name="Proc. Natl. Acad. Sci. U.S.A.">
        <title>The genome sequence of the facultative intracellular pathogen Brucella melitensis.</title>
        <authorList>
            <person name="DelVecchio V.G."/>
            <person name="Kapatral V."/>
            <person name="Redkar R.J."/>
            <person name="Patra G."/>
            <person name="Mujer C."/>
            <person name="Los T."/>
            <person name="Ivanova N."/>
            <person name="Anderson I."/>
            <person name="Bhattacharyya A."/>
            <person name="Lykidis A."/>
            <person name="Reznik G."/>
            <person name="Jablonski L."/>
            <person name="Larsen N."/>
            <person name="D'Souza M."/>
            <person name="Bernal A."/>
            <person name="Mazur M."/>
            <person name="Goltsman E."/>
            <person name="Selkov E."/>
            <person name="Elzer P.H."/>
            <person name="Hagius S."/>
            <person name="O'Callaghan D."/>
            <person name="Letesson J.-J."/>
            <person name="Haselkorn R."/>
            <person name="Kyrpides N.C."/>
            <person name="Overbeek R."/>
        </authorList>
    </citation>
    <scope>NUCLEOTIDE SEQUENCE [LARGE SCALE GENOMIC DNA]</scope>
    <source>
        <strain>ATCC 23456 / CCUG 17765 / NCTC 10094 / 16M</strain>
    </source>
</reference>
<dbReference type="EC" id="6.3.5.3" evidence="1"/>
<dbReference type="EMBL" id="AE008917">
    <property type="protein sequence ID" value="AAL52308.1"/>
    <property type="status" value="ALT_INIT"/>
    <property type="molecule type" value="Genomic_DNA"/>
</dbReference>
<dbReference type="PIR" id="AI3392">
    <property type="entry name" value="AI3392"/>
</dbReference>
<dbReference type="RefSeq" id="WP_002966777.1">
    <property type="nucleotide sequence ID" value="NZ_GG703778.1"/>
</dbReference>
<dbReference type="SMR" id="Q8YGN1"/>
<dbReference type="GeneID" id="93016781"/>
<dbReference type="KEGG" id="bme:BMEI1127"/>
<dbReference type="KEGG" id="bmel:DK63_287"/>
<dbReference type="PATRIC" id="fig|224914.52.peg.296"/>
<dbReference type="eggNOG" id="COG0046">
    <property type="taxonomic scope" value="Bacteria"/>
</dbReference>
<dbReference type="UniPathway" id="UPA00074">
    <property type="reaction ID" value="UER00128"/>
</dbReference>
<dbReference type="PRO" id="PR:Q8YGN1"/>
<dbReference type="Proteomes" id="UP000000419">
    <property type="component" value="Chromosome I"/>
</dbReference>
<dbReference type="GO" id="GO:0005737">
    <property type="term" value="C:cytoplasm"/>
    <property type="evidence" value="ECO:0007669"/>
    <property type="project" value="UniProtKB-SubCell"/>
</dbReference>
<dbReference type="GO" id="GO:0005524">
    <property type="term" value="F:ATP binding"/>
    <property type="evidence" value="ECO:0007669"/>
    <property type="project" value="UniProtKB-UniRule"/>
</dbReference>
<dbReference type="GO" id="GO:0000287">
    <property type="term" value="F:magnesium ion binding"/>
    <property type="evidence" value="ECO:0007669"/>
    <property type="project" value="UniProtKB-UniRule"/>
</dbReference>
<dbReference type="GO" id="GO:0004642">
    <property type="term" value="F:phosphoribosylformylglycinamidine synthase activity"/>
    <property type="evidence" value="ECO:0007669"/>
    <property type="project" value="UniProtKB-UniRule"/>
</dbReference>
<dbReference type="GO" id="GO:0006189">
    <property type="term" value="P:'de novo' IMP biosynthetic process"/>
    <property type="evidence" value="ECO:0007669"/>
    <property type="project" value="UniProtKB-UniRule"/>
</dbReference>
<dbReference type="CDD" id="cd02203">
    <property type="entry name" value="PurL_repeat1"/>
    <property type="match status" value="1"/>
</dbReference>
<dbReference type="CDD" id="cd02204">
    <property type="entry name" value="PurL_repeat2"/>
    <property type="match status" value="1"/>
</dbReference>
<dbReference type="FunFam" id="3.30.1330.10:FF:000004">
    <property type="entry name" value="Phosphoribosylformylglycinamidine synthase subunit PurL"/>
    <property type="match status" value="1"/>
</dbReference>
<dbReference type="Gene3D" id="3.90.650.10">
    <property type="entry name" value="PurM-like C-terminal domain"/>
    <property type="match status" value="2"/>
</dbReference>
<dbReference type="Gene3D" id="3.30.1330.10">
    <property type="entry name" value="PurM-like, N-terminal domain"/>
    <property type="match status" value="2"/>
</dbReference>
<dbReference type="HAMAP" id="MF_00420">
    <property type="entry name" value="PurL_2"/>
    <property type="match status" value="1"/>
</dbReference>
<dbReference type="InterPro" id="IPR010074">
    <property type="entry name" value="PRibForGlyAmidine_synth_PurL"/>
</dbReference>
<dbReference type="InterPro" id="IPR041609">
    <property type="entry name" value="PurL_linker"/>
</dbReference>
<dbReference type="InterPro" id="IPR010918">
    <property type="entry name" value="PurM-like_C_dom"/>
</dbReference>
<dbReference type="InterPro" id="IPR036676">
    <property type="entry name" value="PurM-like_C_sf"/>
</dbReference>
<dbReference type="InterPro" id="IPR016188">
    <property type="entry name" value="PurM-like_N"/>
</dbReference>
<dbReference type="InterPro" id="IPR036921">
    <property type="entry name" value="PurM-like_N_sf"/>
</dbReference>
<dbReference type="NCBIfam" id="TIGR01736">
    <property type="entry name" value="FGAM_synth_II"/>
    <property type="match status" value="1"/>
</dbReference>
<dbReference type="NCBIfam" id="NF002290">
    <property type="entry name" value="PRK01213.1"/>
    <property type="match status" value="1"/>
</dbReference>
<dbReference type="PANTHER" id="PTHR43555">
    <property type="entry name" value="PHOSPHORIBOSYLFORMYLGLYCINAMIDINE SYNTHASE SUBUNIT PURL"/>
    <property type="match status" value="1"/>
</dbReference>
<dbReference type="PANTHER" id="PTHR43555:SF1">
    <property type="entry name" value="PHOSPHORIBOSYLFORMYLGLYCINAMIDINE SYNTHASE SUBUNIT PURL"/>
    <property type="match status" value="1"/>
</dbReference>
<dbReference type="Pfam" id="PF00586">
    <property type="entry name" value="AIRS"/>
    <property type="match status" value="2"/>
</dbReference>
<dbReference type="Pfam" id="PF02769">
    <property type="entry name" value="AIRS_C"/>
    <property type="match status" value="2"/>
</dbReference>
<dbReference type="Pfam" id="PF18072">
    <property type="entry name" value="FGAR-AT_linker"/>
    <property type="match status" value="1"/>
</dbReference>
<dbReference type="PIRSF" id="PIRSF001587">
    <property type="entry name" value="FGAM_synthase_II"/>
    <property type="match status" value="1"/>
</dbReference>
<dbReference type="SUPFAM" id="SSF56042">
    <property type="entry name" value="PurM C-terminal domain-like"/>
    <property type="match status" value="2"/>
</dbReference>
<dbReference type="SUPFAM" id="SSF55326">
    <property type="entry name" value="PurM N-terminal domain-like"/>
    <property type="match status" value="2"/>
</dbReference>
<proteinExistence type="inferred from homology"/>
<comment type="function">
    <text evidence="1">Part of the phosphoribosylformylglycinamidine synthase complex involved in the purines biosynthetic pathway. Catalyzes the ATP-dependent conversion of formylglycinamide ribonucleotide (FGAR) and glutamine to yield formylglycinamidine ribonucleotide (FGAM) and glutamate. The FGAM synthase complex is composed of three subunits. PurQ produces an ammonia molecule by converting glutamine to glutamate. PurL transfers the ammonia molecule to FGAR to form FGAM in an ATP-dependent manner. PurS interacts with PurQ and PurL and is thought to assist in the transfer of the ammonia molecule from PurQ to PurL.</text>
</comment>
<comment type="catalytic activity">
    <reaction evidence="1">
        <text>N(2)-formyl-N(1)-(5-phospho-beta-D-ribosyl)glycinamide + L-glutamine + ATP + H2O = 2-formamido-N(1)-(5-O-phospho-beta-D-ribosyl)acetamidine + L-glutamate + ADP + phosphate + H(+)</text>
        <dbReference type="Rhea" id="RHEA:17129"/>
        <dbReference type="ChEBI" id="CHEBI:15377"/>
        <dbReference type="ChEBI" id="CHEBI:15378"/>
        <dbReference type="ChEBI" id="CHEBI:29985"/>
        <dbReference type="ChEBI" id="CHEBI:30616"/>
        <dbReference type="ChEBI" id="CHEBI:43474"/>
        <dbReference type="ChEBI" id="CHEBI:58359"/>
        <dbReference type="ChEBI" id="CHEBI:147286"/>
        <dbReference type="ChEBI" id="CHEBI:147287"/>
        <dbReference type="ChEBI" id="CHEBI:456216"/>
        <dbReference type="EC" id="6.3.5.3"/>
    </reaction>
</comment>
<comment type="pathway">
    <text evidence="1">Purine metabolism; IMP biosynthesis via de novo pathway; 5-amino-1-(5-phospho-D-ribosyl)imidazole from N(2)-formyl-N(1)-(5-phospho-D-ribosyl)glycinamide: step 1/2.</text>
</comment>
<comment type="subunit">
    <text evidence="1">Monomer. Part of the FGAM synthase complex composed of 1 PurL, 1 PurQ and 2 PurS subunits.</text>
</comment>
<comment type="subcellular location">
    <subcellularLocation>
        <location evidence="1">Cytoplasm</location>
    </subcellularLocation>
</comment>
<comment type="similarity">
    <text evidence="1">Belongs to the FGAMS family.</text>
</comment>
<comment type="sequence caution" evidence="2">
    <conflict type="erroneous initiation">
        <sequence resource="EMBL-CDS" id="AAL52308"/>
    </conflict>
    <text>Truncated N-terminus.</text>
</comment>
<keyword id="KW-0067">ATP-binding</keyword>
<keyword id="KW-0963">Cytoplasm</keyword>
<keyword id="KW-0436">Ligase</keyword>
<keyword id="KW-0460">Magnesium</keyword>
<keyword id="KW-0479">Metal-binding</keyword>
<keyword id="KW-0547">Nucleotide-binding</keyword>
<keyword id="KW-0658">Purine biosynthesis</keyword>
<organism>
    <name type="scientific">Brucella melitensis biotype 1 (strain ATCC 23456 / CCUG 17765 / NCTC 10094 / 16M)</name>
    <dbReference type="NCBI Taxonomy" id="224914"/>
    <lineage>
        <taxon>Bacteria</taxon>
        <taxon>Pseudomonadati</taxon>
        <taxon>Pseudomonadota</taxon>
        <taxon>Alphaproteobacteria</taxon>
        <taxon>Hyphomicrobiales</taxon>
        <taxon>Brucellaceae</taxon>
        <taxon>Brucella/Ochrobactrum group</taxon>
        <taxon>Brucella</taxon>
    </lineage>
</organism>
<accession>Q8YGN1</accession>
<sequence length="740" mass="79148">MTISNTRDITPELIEAHGLKPDEYQRILELIGREPTFTELGIFSAMWNEHCSYKSSKKWLRTLPTSGPRVIQGPGENAGVVDIGDGDCVVFKMESHNHPSYIEPYQGAATGVGGILRDVFTMGARPVAAMNALRFGEPDHPKTRHLVSGVVSGVGGYGNAFGVPTVGGEVNFDKRYNGNILVNAFAAGLARHDGIFLSEAEGVGLPVVYLGAKTSRDGVGGATMASAEFDESIEEKRPTVQVGDPFTEKCLLEACLELMASGAVIAIQDMGAAGLTCSAVEMGAKGDLGIELILDHVPVREENMTAYEMMLSESQERMLMVLKPEKEAEAQAIFRKWGLDFAIVGKTTDDLRFRVIHQGEEVANLPIKDLGDEAPEYDRPWMEPGKHAPLPASNVPQVEDYSAALLKLIGSPDLSSRRWVYEQYDTLIQGNSLQVPGGDAGVIRVEGHETKALAFSSDVTPRYCEADPFEGGKQAVAECWRNITATGAEPLASTDNLNFGNPEKPEIMGQLVKAIEGIGEACRALDFPIVSGNVSLYNETNGQAILPTPTIAGVGLLPDWSQMAKIGGMQDGDTLVLLGGDGTHLGQSVYLRDLFDRADGPAPFVDLALEKRNGEFVRSAIRNGQVTACHDLSDGGLAIAVAEMAIKSGKGATLDAGDGLPHALLFGEDQARYVISATPEMAKLIALNAEGAGVPFRILGTVGGDRLKISKNVDVSVADLTQAYEGWFPNFMNGELTGNN</sequence>
<feature type="chain" id="PRO_0000100444" description="Phosphoribosylformylglycinamidine synthase subunit PurL">
    <location>
        <begin position="1"/>
        <end position="740"/>
    </location>
</feature>
<feature type="active site" evidence="1">
    <location>
        <position position="50"/>
    </location>
</feature>
<feature type="active site" description="Proton acceptor" evidence="1">
    <location>
        <position position="96"/>
    </location>
</feature>
<feature type="binding site" evidence="1">
    <location>
        <position position="53"/>
    </location>
    <ligand>
        <name>ATP</name>
        <dbReference type="ChEBI" id="CHEBI:30616"/>
    </ligand>
</feature>
<feature type="binding site" evidence="1">
    <location>
        <position position="92"/>
    </location>
    <ligand>
        <name>ATP</name>
        <dbReference type="ChEBI" id="CHEBI:30616"/>
    </ligand>
</feature>
<feature type="binding site" evidence="1">
    <location>
        <position position="94"/>
    </location>
    <ligand>
        <name>Mg(2+)</name>
        <dbReference type="ChEBI" id="CHEBI:18420"/>
        <label>1</label>
    </ligand>
</feature>
<feature type="binding site" evidence="1">
    <location>
        <begin position="95"/>
        <end position="98"/>
    </location>
    <ligand>
        <name>substrate</name>
    </ligand>
</feature>
<feature type="binding site" evidence="1">
    <location>
        <position position="117"/>
    </location>
    <ligand>
        <name>substrate</name>
    </ligand>
</feature>
<feature type="binding site" evidence="1">
    <location>
        <position position="118"/>
    </location>
    <ligand>
        <name>Mg(2+)</name>
        <dbReference type="ChEBI" id="CHEBI:18420"/>
        <label>2</label>
    </ligand>
</feature>
<feature type="binding site" evidence="1">
    <location>
        <position position="241"/>
    </location>
    <ligand>
        <name>substrate</name>
    </ligand>
</feature>
<feature type="binding site" evidence="1">
    <location>
        <position position="269"/>
    </location>
    <ligand>
        <name>Mg(2+)</name>
        <dbReference type="ChEBI" id="CHEBI:18420"/>
        <label>2</label>
    </ligand>
</feature>
<feature type="binding site" evidence="1">
    <location>
        <begin position="313"/>
        <end position="315"/>
    </location>
    <ligand>
        <name>substrate</name>
    </ligand>
</feature>
<feature type="binding site" evidence="1">
    <location>
        <position position="495"/>
    </location>
    <ligand>
        <name>ATP</name>
        <dbReference type="ChEBI" id="CHEBI:30616"/>
    </ligand>
</feature>
<feature type="binding site" evidence="1">
    <location>
        <position position="532"/>
    </location>
    <ligand>
        <name>ATP</name>
        <dbReference type="ChEBI" id="CHEBI:30616"/>
    </ligand>
</feature>
<feature type="binding site" evidence="1">
    <location>
        <position position="533"/>
    </location>
    <ligand>
        <name>Mg(2+)</name>
        <dbReference type="ChEBI" id="CHEBI:18420"/>
        <label>1</label>
    </ligand>
</feature>
<feature type="binding site" evidence="1">
    <location>
        <position position="535"/>
    </location>
    <ligand>
        <name>substrate</name>
    </ligand>
</feature>
<name>PURL_BRUME</name>
<gene>
    <name evidence="1" type="primary">purL</name>
    <name type="ordered locus">BMEI1127</name>
</gene>
<protein>
    <recommendedName>
        <fullName evidence="1">Phosphoribosylformylglycinamidine synthase subunit PurL</fullName>
        <shortName evidence="1">FGAM synthase</shortName>
        <ecNumber evidence="1">6.3.5.3</ecNumber>
    </recommendedName>
    <alternativeName>
        <fullName evidence="1">Formylglycinamide ribonucleotide amidotransferase subunit II</fullName>
        <shortName evidence="1">FGAR amidotransferase II</shortName>
        <shortName evidence="1">FGAR-AT II</shortName>
    </alternativeName>
    <alternativeName>
        <fullName evidence="1">Glutamine amidotransferase PurL</fullName>
    </alternativeName>
    <alternativeName>
        <fullName evidence="1">Phosphoribosylformylglycinamidine synthase subunit II</fullName>
    </alternativeName>
</protein>